<organism>
    <name type="scientific">Nitrobacter hamburgensis (strain DSM 10229 / NCIMB 13809 / X14)</name>
    <dbReference type="NCBI Taxonomy" id="323097"/>
    <lineage>
        <taxon>Bacteria</taxon>
        <taxon>Pseudomonadati</taxon>
        <taxon>Pseudomonadota</taxon>
        <taxon>Alphaproteobacteria</taxon>
        <taxon>Hyphomicrobiales</taxon>
        <taxon>Nitrobacteraceae</taxon>
        <taxon>Nitrobacter</taxon>
    </lineage>
</organism>
<sequence length="101" mass="11469">MAKKSSIEKNNRRKRMTGNAAAKRARLKTIIADKTKPMEERFAATLKLAEMPRNSSATRIRNRCELTGRPRSNYRKTKLSRIALRDLGSRGLVPGLVKSSW</sequence>
<name>RS14_NITHX</name>
<dbReference type="EMBL" id="CP000319">
    <property type="protein sequence ID" value="ABE62380.1"/>
    <property type="molecule type" value="Genomic_DNA"/>
</dbReference>
<dbReference type="RefSeq" id="WP_011510066.1">
    <property type="nucleotide sequence ID" value="NC_007964.1"/>
</dbReference>
<dbReference type="SMR" id="Q1QN17"/>
<dbReference type="STRING" id="323097.Nham_1558"/>
<dbReference type="KEGG" id="nha:Nham_1558"/>
<dbReference type="eggNOG" id="COG0199">
    <property type="taxonomic scope" value="Bacteria"/>
</dbReference>
<dbReference type="HOGENOM" id="CLU_139869_0_1_5"/>
<dbReference type="OrthoDB" id="9810484at2"/>
<dbReference type="Proteomes" id="UP000001953">
    <property type="component" value="Chromosome"/>
</dbReference>
<dbReference type="GO" id="GO:0005737">
    <property type="term" value="C:cytoplasm"/>
    <property type="evidence" value="ECO:0007669"/>
    <property type="project" value="UniProtKB-ARBA"/>
</dbReference>
<dbReference type="GO" id="GO:0015935">
    <property type="term" value="C:small ribosomal subunit"/>
    <property type="evidence" value="ECO:0007669"/>
    <property type="project" value="TreeGrafter"/>
</dbReference>
<dbReference type="GO" id="GO:0019843">
    <property type="term" value="F:rRNA binding"/>
    <property type="evidence" value="ECO:0007669"/>
    <property type="project" value="UniProtKB-UniRule"/>
</dbReference>
<dbReference type="GO" id="GO:0003735">
    <property type="term" value="F:structural constituent of ribosome"/>
    <property type="evidence" value="ECO:0007669"/>
    <property type="project" value="InterPro"/>
</dbReference>
<dbReference type="GO" id="GO:0006412">
    <property type="term" value="P:translation"/>
    <property type="evidence" value="ECO:0007669"/>
    <property type="project" value="UniProtKB-UniRule"/>
</dbReference>
<dbReference type="FunFam" id="1.10.287.1480:FF:000001">
    <property type="entry name" value="30S ribosomal protein S14"/>
    <property type="match status" value="1"/>
</dbReference>
<dbReference type="Gene3D" id="1.10.287.1480">
    <property type="match status" value="1"/>
</dbReference>
<dbReference type="HAMAP" id="MF_00537">
    <property type="entry name" value="Ribosomal_uS14_1"/>
    <property type="match status" value="1"/>
</dbReference>
<dbReference type="InterPro" id="IPR001209">
    <property type="entry name" value="Ribosomal_uS14"/>
</dbReference>
<dbReference type="InterPro" id="IPR023036">
    <property type="entry name" value="Ribosomal_uS14_bac/plastid"/>
</dbReference>
<dbReference type="NCBIfam" id="NF006477">
    <property type="entry name" value="PRK08881.1"/>
    <property type="match status" value="1"/>
</dbReference>
<dbReference type="PANTHER" id="PTHR19836">
    <property type="entry name" value="30S RIBOSOMAL PROTEIN S14"/>
    <property type="match status" value="1"/>
</dbReference>
<dbReference type="PANTHER" id="PTHR19836:SF19">
    <property type="entry name" value="SMALL RIBOSOMAL SUBUNIT PROTEIN US14M"/>
    <property type="match status" value="1"/>
</dbReference>
<dbReference type="Pfam" id="PF00253">
    <property type="entry name" value="Ribosomal_S14"/>
    <property type="match status" value="1"/>
</dbReference>
<dbReference type="SUPFAM" id="SSF57716">
    <property type="entry name" value="Glucocorticoid receptor-like (DNA-binding domain)"/>
    <property type="match status" value="1"/>
</dbReference>
<feature type="chain" id="PRO_1000128466" description="Small ribosomal subunit protein uS14">
    <location>
        <begin position="1"/>
        <end position="101"/>
    </location>
</feature>
<feature type="region of interest" description="Disordered" evidence="2">
    <location>
        <begin position="1"/>
        <end position="23"/>
    </location>
</feature>
<feature type="compositionally biased region" description="Basic and acidic residues" evidence="2">
    <location>
        <begin position="1"/>
        <end position="10"/>
    </location>
</feature>
<accession>Q1QN17</accession>
<protein>
    <recommendedName>
        <fullName evidence="1">Small ribosomal subunit protein uS14</fullName>
    </recommendedName>
    <alternativeName>
        <fullName evidence="3">30S ribosomal protein S14</fullName>
    </alternativeName>
</protein>
<evidence type="ECO:0000255" key="1">
    <source>
        <dbReference type="HAMAP-Rule" id="MF_00537"/>
    </source>
</evidence>
<evidence type="ECO:0000256" key="2">
    <source>
        <dbReference type="SAM" id="MobiDB-lite"/>
    </source>
</evidence>
<evidence type="ECO:0000305" key="3"/>
<gene>
    <name evidence="1" type="primary">rpsN</name>
    <name type="ordered locus">Nham_1558</name>
</gene>
<keyword id="KW-1185">Reference proteome</keyword>
<keyword id="KW-0687">Ribonucleoprotein</keyword>
<keyword id="KW-0689">Ribosomal protein</keyword>
<keyword id="KW-0694">RNA-binding</keyword>
<keyword id="KW-0699">rRNA-binding</keyword>
<reference key="1">
    <citation type="submission" date="2006-03" db="EMBL/GenBank/DDBJ databases">
        <title>Complete sequence of chromosome of Nitrobacter hamburgensis X14.</title>
        <authorList>
            <consortium name="US DOE Joint Genome Institute"/>
            <person name="Copeland A."/>
            <person name="Lucas S."/>
            <person name="Lapidus A."/>
            <person name="Barry K."/>
            <person name="Detter J.C."/>
            <person name="Glavina del Rio T."/>
            <person name="Hammon N."/>
            <person name="Israni S."/>
            <person name="Dalin E."/>
            <person name="Tice H."/>
            <person name="Pitluck S."/>
            <person name="Chain P."/>
            <person name="Malfatti S."/>
            <person name="Shin M."/>
            <person name="Vergez L."/>
            <person name="Schmutz J."/>
            <person name="Larimer F."/>
            <person name="Land M."/>
            <person name="Hauser L."/>
            <person name="Kyrpides N."/>
            <person name="Ivanova N."/>
            <person name="Ward B."/>
            <person name="Arp D."/>
            <person name="Klotz M."/>
            <person name="Stein L."/>
            <person name="O'Mullan G."/>
            <person name="Starkenburg S."/>
            <person name="Sayavedra L."/>
            <person name="Poret-Peterson A.T."/>
            <person name="Gentry M.E."/>
            <person name="Bruce D."/>
            <person name="Richardson P."/>
        </authorList>
    </citation>
    <scope>NUCLEOTIDE SEQUENCE [LARGE SCALE GENOMIC DNA]</scope>
    <source>
        <strain>DSM 10229 / NCIMB 13809 / X14</strain>
    </source>
</reference>
<proteinExistence type="inferred from homology"/>
<comment type="function">
    <text evidence="1">Binds 16S rRNA, required for the assembly of 30S particles and may also be responsible for determining the conformation of the 16S rRNA at the A site.</text>
</comment>
<comment type="subunit">
    <text evidence="1">Part of the 30S ribosomal subunit. Contacts proteins S3 and S10.</text>
</comment>
<comment type="similarity">
    <text evidence="1">Belongs to the universal ribosomal protein uS14 family.</text>
</comment>